<evidence type="ECO:0000305" key="1"/>
<feature type="signal peptide">
    <location>
        <begin position="1"/>
        <end position="22"/>
    </location>
</feature>
<feature type="chain" id="PRO_0000009190" description="F41 fimbrial protein">
    <location>
        <begin position="23"/>
        <end position="277"/>
    </location>
</feature>
<feature type="sequence conflict" description="In Ref. 2; AAA23421." evidence="1" ref="2">
    <original>D</original>
    <variation>N</variation>
    <location>
        <position position="156"/>
    </location>
</feature>
<feature type="sequence conflict" description="In Ref. 2; AAA23421." evidence="1" ref="2">
    <original>IG</original>
    <variation>TS</variation>
    <location>
        <begin position="166"/>
        <end position="167"/>
    </location>
</feature>
<feature type="sequence conflict" description="In Ref. 2; AAA23421." evidence="1" ref="2">
    <original>Q</original>
    <variation>K</variation>
    <location>
        <position position="211"/>
    </location>
</feature>
<feature type="sequence conflict" description="In Ref. 2; AAA23421." evidence="1" ref="2">
    <original>S</original>
    <variation>P</variation>
    <location>
        <position position="229"/>
    </location>
</feature>
<feature type="sequence conflict" description="In Ref. 2; AAA23421." evidence="1" ref="2">
    <original>N</original>
    <variation>D</variation>
    <location>
        <position position="235"/>
    </location>
</feature>
<organism>
    <name type="scientific">Escherichia coli</name>
    <dbReference type="NCBI Taxonomy" id="562"/>
    <lineage>
        <taxon>Bacteria</taxon>
        <taxon>Pseudomonadati</taxon>
        <taxon>Pseudomonadota</taxon>
        <taxon>Gammaproteobacteria</taxon>
        <taxon>Enterobacterales</taxon>
        <taxon>Enterobacteriaceae</taxon>
        <taxon>Escherichia</taxon>
    </lineage>
</organism>
<protein>
    <recommendedName>
        <fullName>F41 fimbrial protein</fullName>
    </recommendedName>
    <alternativeName>
        <fullName>Adhesin F41</fullName>
    </alternativeName>
</protein>
<comment type="function">
    <text>Fimbriae (also called pili), polar filaments radiating from the surface of the bacterium to a length of 0.5-1.5 micrometers and numbering 100-300 per cell, enable bacteria to colonize the epithelium of specific host organs.</text>
</comment>
<comment type="subcellular location">
    <subcellularLocation>
        <location>Fimbrium</location>
    </subcellularLocation>
</comment>
<comment type="similarity">
    <text evidence="1">Belongs to the fimbrial K88 protein family.</text>
</comment>
<sequence length="277" mass="29001">MKKTLIALAVAASAAVSGSVMAADWTEGQPGDIIIGGEITSPSVKWLWKTGEGLSSFSNTTNEIVKRKLNISVPTDELFLAAKMSDGIKGVFVGNTLIPKIEMASYDGSVITPSFTSNTAMDIAVKVKNSGDNTELGTLSVPLSFGAAVATIFDGDTTDSAVAHIIGGSAGTVFEGLVNPGRFTDQNIAYKWNGLSKAEMAGYVEKLMPGQSASTSYSGFHNWDDLSHSNYTSANKASYLSYGSGVSAGSTLVMNLNKDVAGRLEWVAPVTITVIYS</sequence>
<gene>
    <name type="primary">FimF41a</name>
</gene>
<dbReference type="EMBL" id="X14354">
    <property type="protein sequence ID" value="CAA32535.1"/>
    <property type="molecule type" value="Genomic_DNA"/>
</dbReference>
<dbReference type="EMBL" id="M21788">
    <property type="protein sequence ID" value="AAA23421.1"/>
    <property type="molecule type" value="Genomic_DNA"/>
</dbReference>
<dbReference type="PIR" id="S04072">
    <property type="entry name" value="S04072"/>
</dbReference>
<dbReference type="SMR" id="P11900"/>
<dbReference type="GO" id="GO:0009289">
    <property type="term" value="C:pilus"/>
    <property type="evidence" value="ECO:0007669"/>
    <property type="project" value="UniProtKB-SubCell"/>
</dbReference>
<dbReference type="GO" id="GO:0007155">
    <property type="term" value="P:cell adhesion"/>
    <property type="evidence" value="ECO:0007669"/>
    <property type="project" value="InterPro"/>
</dbReference>
<dbReference type="InterPro" id="IPR003467">
    <property type="entry name" value="Fimbrial_K88_FaeH"/>
</dbReference>
<dbReference type="Pfam" id="PF02432">
    <property type="entry name" value="Fimbrial_K88"/>
    <property type="match status" value="1"/>
</dbReference>
<name>FMF4_ECOLX</name>
<reference key="1">
    <citation type="journal article" date="1989" name="Nucleic Acids Res.">
        <title>Nucleotide sequence of the F41 fimbriae subunit gene in Escherichia coli B41.</title>
        <authorList>
            <person name="Fidock D.A."/>
            <person name="McNicholas P.A."/>
            <person name="Lehrbach P.R."/>
        </authorList>
    </citation>
    <scope>NUCLEOTIDE SEQUENCE [GENOMIC DNA]</scope>
    <source>
        <strain>B41</strain>
    </source>
</reference>
<reference key="2">
    <citation type="journal article" date="1988" name="J. Bacteriol.">
        <title>Escherichia coli F41 adhesin: genetic organization, nucleotide sequence, and homology with the K88 determinant.</title>
        <authorList>
            <person name="Anderson D.G."/>
            <person name="Moseley S.L."/>
        </authorList>
    </citation>
    <scope>NUCLEOTIDE SEQUENCE [GENOMIC DNA]</scope>
</reference>
<accession>P11900</accession>
<proteinExistence type="inferred from homology"/>
<keyword id="KW-0281">Fimbrium</keyword>
<keyword id="KW-0732">Signal</keyword>